<reference key="1">
    <citation type="submission" date="2008-08" db="EMBL/GenBank/DDBJ databases">
        <title>Complete sequence of Acidithiobacillus ferrooxidans ATCC 53993.</title>
        <authorList>
            <person name="Lucas S."/>
            <person name="Copeland A."/>
            <person name="Lapidus A."/>
            <person name="Glavina del Rio T."/>
            <person name="Dalin E."/>
            <person name="Tice H."/>
            <person name="Bruce D."/>
            <person name="Goodwin L."/>
            <person name="Pitluck S."/>
            <person name="Sims D."/>
            <person name="Brettin T."/>
            <person name="Detter J.C."/>
            <person name="Han C."/>
            <person name="Kuske C.R."/>
            <person name="Larimer F."/>
            <person name="Land M."/>
            <person name="Hauser L."/>
            <person name="Kyrpides N."/>
            <person name="Lykidis A."/>
            <person name="Borole A.P."/>
        </authorList>
    </citation>
    <scope>NUCLEOTIDE SEQUENCE [LARGE SCALE GENOMIC DNA]</scope>
    <source>
        <strain>ATCC 53993 / BNL-5-31</strain>
    </source>
</reference>
<evidence type="ECO:0000255" key="1">
    <source>
        <dbReference type="HAMAP-Rule" id="MF_01358"/>
    </source>
</evidence>
<accession>B5EN68</accession>
<comment type="function">
    <text evidence="1">NDH-1 shuttles electrons from NADH, via FMN and iron-sulfur (Fe-S) centers, to quinones in the respiratory chain. The immediate electron acceptor for the enzyme in this species is believed to be ubiquinone. Couples the redox reaction to proton translocation (for every two electrons transferred, four hydrogen ions are translocated across the cytoplasmic membrane), and thus conserves the redox energy in a proton gradient.</text>
</comment>
<comment type="catalytic activity">
    <reaction evidence="1">
        <text>a quinone + NADH + 5 H(+)(in) = a quinol + NAD(+) + 4 H(+)(out)</text>
        <dbReference type="Rhea" id="RHEA:57888"/>
        <dbReference type="ChEBI" id="CHEBI:15378"/>
        <dbReference type="ChEBI" id="CHEBI:24646"/>
        <dbReference type="ChEBI" id="CHEBI:57540"/>
        <dbReference type="ChEBI" id="CHEBI:57945"/>
        <dbReference type="ChEBI" id="CHEBI:132124"/>
    </reaction>
</comment>
<comment type="subunit">
    <text evidence="1">NDH-1 is composed of 14 different subunits. Subunits NuoB, C, D, E, F, and G constitute the peripheral sector of the complex.</text>
</comment>
<comment type="subcellular location">
    <subcellularLocation>
        <location evidence="1">Cell inner membrane</location>
        <topology evidence="1">Peripheral membrane protein</topology>
        <orientation evidence="1">Cytoplasmic side</orientation>
    </subcellularLocation>
</comment>
<comment type="similarity">
    <text evidence="1">Belongs to the complex I 49 kDa subunit family.</text>
</comment>
<feature type="chain" id="PRO_0000357748" description="NADH-quinone oxidoreductase subunit D">
    <location>
        <begin position="1"/>
        <end position="417"/>
    </location>
</feature>
<organism>
    <name type="scientific">Acidithiobacillus ferrooxidans (strain ATCC 53993 / BNL-5-31)</name>
    <name type="common">Leptospirillum ferrooxidans (ATCC 53993)</name>
    <dbReference type="NCBI Taxonomy" id="380394"/>
    <lineage>
        <taxon>Bacteria</taxon>
        <taxon>Pseudomonadati</taxon>
        <taxon>Pseudomonadota</taxon>
        <taxon>Acidithiobacillia</taxon>
        <taxon>Acidithiobacillales</taxon>
        <taxon>Acidithiobacillaceae</taxon>
        <taxon>Acidithiobacillus</taxon>
    </lineage>
</organism>
<name>NUOD_ACIF5</name>
<gene>
    <name evidence="1" type="primary">nuoD</name>
    <name type="ordered locus">Lferr_2254</name>
</gene>
<protein>
    <recommendedName>
        <fullName evidence="1">NADH-quinone oxidoreductase subunit D</fullName>
        <ecNumber evidence="1">7.1.1.-</ecNumber>
    </recommendedName>
    <alternativeName>
        <fullName evidence="1">NADH dehydrogenase I subunit D</fullName>
    </alternativeName>
    <alternativeName>
        <fullName evidence="1">NDH-1 subunit D</fullName>
    </alternativeName>
</protein>
<dbReference type="EC" id="7.1.1.-" evidence="1"/>
<dbReference type="EMBL" id="CP001132">
    <property type="protein sequence ID" value="ACH84457.1"/>
    <property type="molecule type" value="Genomic_DNA"/>
</dbReference>
<dbReference type="RefSeq" id="WP_012537302.1">
    <property type="nucleotide sequence ID" value="NC_011206.1"/>
</dbReference>
<dbReference type="SMR" id="B5EN68"/>
<dbReference type="KEGG" id="afe:Lferr_2254"/>
<dbReference type="eggNOG" id="COG0649">
    <property type="taxonomic scope" value="Bacteria"/>
</dbReference>
<dbReference type="HOGENOM" id="CLU_015134_1_1_6"/>
<dbReference type="GO" id="GO:0005886">
    <property type="term" value="C:plasma membrane"/>
    <property type="evidence" value="ECO:0007669"/>
    <property type="project" value="UniProtKB-SubCell"/>
</dbReference>
<dbReference type="GO" id="GO:0051287">
    <property type="term" value="F:NAD binding"/>
    <property type="evidence" value="ECO:0007669"/>
    <property type="project" value="InterPro"/>
</dbReference>
<dbReference type="GO" id="GO:0050136">
    <property type="term" value="F:NADH:ubiquinone reductase (non-electrogenic) activity"/>
    <property type="evidence" value="ECO:0007669"/>
    <property type="project" value="UniProtKB-UniRule"/>
</dbReference>
<dbReference type="GO" id="GO:0048038">
    <property type="term" value="F:quinone binding"/>
    <property type="evidence" value="ECO:0007669"/>
    <property type="project" value="UniProtKB-KW"/>
</dbReference>
<dbReference type="FunFam" id="1.10.645.10:FF:000005">
    <property type="entry name" value="NADH-quinone oxidoreductase subunit D"/>
    <property type="match status" value="1"/>
</dbReference>
<dbReference type="Gene3D" id="1.10.645.10">
    <property type="entry name" value="Cytochrome-c3 Hydrogenase, chain B"/>
    <property type="match status" value="1"/>
</dbReference>
<dbReference type="HAMAP" id="MF_01358">
    <property type="entry name" value="NDH1_NuoD"/>
    <property type="match status" value="1"/>
</dbReference>
<dbReference type="InterPro" id="IPR001135">
    <property type="entry name" value="NADH_Q_OxRdtase_suD"/>
</dbReference>
<dbReference type="InterPro" id="IPR014029">
    <property type="entry name" value="NADH_UbQ_OxRdtase_49kDa_CS"/>
</dbReference>
<dbReference type="InterPro" id="IPR022885">
    <property type="entry name" value="NDH1_su_D/H"/>
</dbReference>
<dbReference type="InterPro" id="IPR029014">
    <property type="entry name" value="NiFe-Hase_large"/>
</dbReference>
<dbReference type="NCBIfam" id="TIGR01962">
    <property type="entry name" value="NuoD"/>
    <property type="match status" value="1"/>
</dbReference>
<dbReference type="NCBIfam" id="NF004739">
    <property type="entry name" value="PRK06075.1"/>
    <property type="match status" value="1"/>
</dbReference>
<dbReference type="PANTHER" id="PTHR11993:SF10">
    <property type="entry name" value="NADH DEHYDROGENASE [UBIQUINONE] IRON-SULFUR PROTEIN 2, MITOCHONDRIAL"/>
    <property type="match status" value="1"/>
</dbReference>
<dbReference type="PANTHER" id="PTHR11993">
    <property type="entry name" value="NADH-UBIQUINONE OXIDOREDUCTASE 49 KDA SUBUNIT"/>
    <property type="match status" value="1"/>
</dbReference>
<dbReference type="Pfam" id="PF00346">
    <property type="entry name" value="Complex1_49kDa"/>
    <property type="match status" value="1"/>
</dbReference>
<dbReference type="SUPFAM" id="SSF56762">
    <property type="entry name" value="HydB/Nqo4-like"/>
    <property type="match status" value="1"/>
</dbReference>
<dbReference type="PROSITE" id="PS00535">
    <property type="entry name" value="COMPLEX1_49K"/>
    <property type="match status" value="1"/>
</dbReference>
<sequence length="417" mass="47504">MPEINNFTMNFGPQHPSAHGVLRLVLELDGEVIERADPHIGLLHRATEKLAENKTYLQNLPYMDRLDYVSMLCNEHAYCLAVEKLLGVEVPVRAQYIRTLFDEITRILNHLLWLGAYALDVGAMSVFLYCFREREDLMDVYEAVSGARMHAAYYRPGGVYRDLPAQMPQYQPSPYRDARRLQELNANRQGSMLDFIEDFARRFPTYVDEYETLLTDNRIWKQRTVGIGVVGPERAIQLGFTGPMLRSSGVAWDLRRTQPYAAYADLDFDIPVGKTGDCYDRYLVRVAEMRQSNRIIVQCVDWLRKNPGPVITDDFKIAAPSREEMKTSMEALIHHFKLFSEGMAVPAGEVYAAVEAPKGEFGIYMISDGANKPYRMKIRAPGFPHLAAMDEMARGHMIADVVAILSTMDIVFGEIDR</sequence>
<proteinExistence type="inferred from homology"/>
<keyword id="KW-0997">Cell inner membrane</keyword>
<keyword id="KW-1003">Cell membrane</keyword>
<keyword id="KW-0472">Membrane</keyword>
<keyword id="KW-0520">NAD</keyword>
<keyword id="KW-0874">Quinone</keyword>
<keyword id="KW-1278">Translocase</keyword>
<keyword id="KW-0813">Transport</keyword>
<keyword id="KW-0830">Ubiquinone</keyword>